<sequence>MPSDYTSHYPVILIKKKKKKIAGMYRHSKRYLEIMSTASAQFVGN</sequence>
<name>YI018_YEAST</name>
<dbReference type="EMBL" id="Z37996">
    <property type="status" value="NOT_ANNOTATED_CDS"/>
    <property type="molecule type" value="Genomic_DNA"/>
</dbReference>
<dbReference type="EMBL" id="BK006942">
    <property type="protein sequence ID" value="DAA08565.1"/>
    <property type="molecule type" value="Genomic_DNA"/>
</dbReference>
<dbReference type="RefSeq" id="NP_878099.1">
    <property type="nucleotide sequence ID" value="NM_001184655.1"/>
</dbReference>
<dbReference type="BioGRID" id="37036">
    <property type="interactions" value="21"/>
</dbReference>
<dbReference type="FunCoup" id="Q3E7Z3">
    <property type="interactions" value="53"/>
</dbReference>
<dbReference type="STRING" id="4932.YIR018C-A"/>
<dbReference type="PaxDb" id="4932-YIR018C-A"/>
<dbReference type="EnsemblFungi" id="YIR018C-A_mRNA">
    <property type="protein sequence ID" value="YIR018C-A"/>
    <property type="gene ID" value="YIR018C-A"/>
</dbReference>
<dbReference type="GeneID" id="1466494"/>
<dbReference type="KEGG" id="sce:YIR018C-A"/>
<dbReference type="AGR" id="SGD:S000028837"/>
<dbReference type="SGD" id="S000028837">
    <property type="gene designation" value="YIR018C-A"/>
</dbReference>
<dbReference type="VEuPathDB" id="FungiDB:YIR018C-A"/>
<dbReference type="HOGENOM" id="CLU_3207948_0_0_1"/>
<dbReference type="InParanoid" id="Q3E7Z3"/>
<dbReference type="BioCyc" id="YEAST:G3O-31475-MONOMER"/>
<dbReference type="BioGRID-ORCS" id="1466494">
    <property type="hits" value="4 hits in 10 CRISPR screens"/>
</dbReference>
<dbReference type="PRO" id="PR:Q3E7Z3"/>
<dbReference type="Proteomes" id="UP000002311">
    <property type="component" value="Chromosome IX"/>
</dbReference>
<proteinExistence type="evidence at protein level"/>
<feature type="chain" id="PRO_0000245406" description="Uncharacterized protein YIR018C-A">
    <location>
        <begin position="1"/>
        <end position="45"/>
    </location>
</feature>
<protein>
    <recommendedName>
        <fullName>Uncharacterized protein YIR018C-A</fullName>
    </recommendedName>
</protein>
<organism>
    <name type="scientific">Saccharomyces cerevisiae (strain ATCC 204508 / S288c)</name>
    <name type="common">Baker's yeast</name>
    <dbReference type="NCBI Taxonomy" id="559292"/>
    <lineage>
        <taxon>Eukaryota</taxon>
        <taxon>Fungi</taxon>
        <taxon>Dikarya</taxon>
        <taxon>Ascomycota</taxon>
        <taxon>Saccharomycotina</taxon>
        <taxon>Saccharomycetes</taxon>
        <taxon>Saccharomycetales</taxon>
        <taxon>Saccharomycetaceae</taxon>
        <taxon>Saccharomyces</taxon>
    </lineage>
</organism>
<accession>Q3E7Z3</accession>
<accession>D6VVU9</accession>
<reference key="1">
    <citation type="journal article" date="1997" name="Nature">
        <title>The nucleotide sequence of Saccharomyces cerevisiae chromosome IX.</title>
        <authorList>
            <person name="Churcher C.M."/>
            <person name="Bowman S."/>
            <person name="Badcock K."/>
            <person name="Bankier A.T."/>
            <person name="Brown D."/>
            <person name="Chillingworth T."/>
            <person name="Connor R."/>
            <person name="Devlin K."/>
            <person name="Gentles S."/>
            <person name="Hamlin N."/>
            <person name="Harris D.E."/>
            <person name="Horsnell T."/>
            <person name="Hunt S."/>
            <person name="Jagels K."/>
            <person name="Jones M."/>
            <person name="Lye G."/>
            <person name="Moule S."/>
            <person name="Odell C."/>
            <person name="Pearson D."/>
            <person name="Rajandream M.A."/>
            <person name="Rice P."/>
            <person name="Rowley N."/>
            <person name="Skelton J."/>
            <person name="Smith V."/>
            <person name="Walsh S.V."/>
            <person name="Whitehead S."/>
            <person name="Barrell B.G."/>
        </authorList>
    </citation>
    <scope>NUCLEOTIDE SEQUENCE [LARGE SCALE GENOMIC DNA]</scope>
    <source>
        <strain>ATCC 204508 / S288c</strain>
    </source>
</reference>
<reference key="2">
    <citation type="journal article" date="2014" name="G3 (Bethesda)">
        <title>The reference genome sequence of Saccharomyces cerevisiae: Then and now.</title>
        <authorList>
            <person name="Engel S.R."/>
            <person name="Dietrich F.S."/>
            <person name="Fisk D.G."/>
            <person name="Binkley G."/>
            <person name="Balakrishnan R."/>
            <person name="Costanzo M.C."/>
            <person name="Dwight S.S."/>
            <person name="Hitz B.C."/>
            <person name="Karra K."/>
            <person name="Nash R.S."/>
            <person name="Weng S."/>
            <person name="Wong E.D."/>
            <person name="Lloyd P."/>
            <person name="Skrzypek M.S."/>
            <person name="Miyasato S.R."/>
            <person name="Simison M."/>
            <person name="Cherry J.M."/>
        </authorList>
    </citation>
    <scope>GENOME REANNOTATION</scope>
    <source>
        <strain>ATCC 204508 / S288c</strain>
    </source>
</reference>
<reference key="3">
    <citation type="journal article" date="2002" name="Genome Res.">
        <title>Parallel identification of new genes in Saccharomyces cerevisiae.</title>
        <authorList>
            <person name="Oshiro G."/>
            <person name="Wodicka L.M."/>
            <person name="Washburn M.P."/>
            <person name="Yates J.R. III"/>
            <person name="Lockhart D.J."/>
            <person name="Winzeler E.A."/>
        </authorList>
    </citation>
    <scope>IDENTIFICATION BY MASS SPECTROMETRY</scope>
</reference>
<keyword id="KW-1185">Reference proteome</keyword>
<gene>
    <name type="ordered locus">YIR018C-A</name>
</gene>